<feature type="initiator methionine" description="Removed" evidence="2">
    <location>
        <position position="1"/>
    </location>
</feature>
<feature type="chain" id="PRO_0000301680" description="T-cell leukemia translocation-altered gene protein homolog">
    <location>
        <begin position="2"/>
        <end position="106"/>
    </location>
</feature>
<feature type="topological domain" description="Extracellular" evidence="3">
    <location>
        <begin position="2"/>
        <end position="8"/>
    </location>
</feature>
<feature type="transmembrane region" description="Helical" evidence="3">
    <location>
        <begin position="9"/>
        <end position="29"/>
    </location>
</feature>
<feature type="topological domain" description="Cytoplasmic" evidence="3">
    <location>
        <begin position="30"/>
        <end position="43"/>
    </location>
</feature>
<feature type="transmembrane region" description="Helical" evidence="3">
    <location>
        <begin position="44"/>
        <end position="64"/>
    </location>
</feature>
<feature type="topological domain" description="Extracellular" evidence="3">
    <location>
        <begin position="65"/>
        <end position="106"/>
    </location>
</feature>
<feature type="region of interest" description="Disordered" evidence="4">
    <location>
        <begin position="74"/>
        <end position="106"/>
    </location>
</feature>
<feature type="compositionally biased region" description="Polar residues" evidence="4">
    <location>
        <begin position="81"/>
        <end position="90"/>
    </location>
</feature>
<feature type="modified residue" description="N-acetylalanine" evidence="2">
    <location>
        <position position="2"/>
    </location>
</feature>
<evidence type="ECO:0000250" key="1"/>
<evidence type="ECO:0000250" key="2">
    <source>
        <dbReference type="UniProtKB" id="P57738"/>
    </source>
</evidence>
<evidence type="ECO:0000255" key="3"/>
<evidence type="ECO:0000256" key="4">
    <source>
        <dbReference type="SAM" id="MobiDB-lite"/>
    </source>
</evidence>
<evidence type="ECO:0000305" key="5"/>
<accession>Q5R7E2</accession>
<keyword id="KW-0007">Acetylation</keyword>
<keyword id="KW-0472">Membrane</keyword>
<keyword id="KW-1185">Reference proteome</keyword>
<keyword id="KW-0812">Transmembrane</keyword>
<keyword id="KW-1133">Transmembrane helix</keyword>
<comment type="function">
    <text evidence="1">May be required for cellular fusion during osteoclastogenesis.</text>
</comment>
<comment type="subcellular location">
    <subcellularLocation>
        <location evidence="5">Membrane</location>
        <topology evidence="5">Multi-pass membrane protein</topology>
    </subcellularLocation>
</comment>
<comment type="similarity">
    <text evidence="5">Belongs to the TCTA family.</text>
</comment>
<name>TCTA_PONAB</name>
<sequence length="106" mass="11582">MAESWSGQALQALPATVLGALGALGSEFLREWEAQDMRVTLFKLLLLWLVLSLLGIQLAWGFYGNTVTGLYHRPGLGGQNGSTPDGSTHFPSWEMAANEPLKTHRE</sequence>
<gene>
    <name type="primary">TCTA</name>
</gene>
<dbReference type="EMBL" id="CR860176">
    <property type="protein sequence ID" value="CAH92318.1"/>
    <property type="molecule type" value="mRNA"/>
</dbReference>
<dbReference type="RefSeq" id="NP_001126359.1">
    <property type="nucleotide sequence ID" value="NM_001132887.2"/>
</dbReference>
<dbReference type="SMR" id="Q5R7E2"/>
<dbReference type="FunCoup" id="Q5R7E2">
    <property type="interactions" value="112"/>
</dbReference>
<dbReference type="GeneID" id="100173340"/>
<dbReference type="KEGG" id="pon:100173340"/>
<dbReference type="CTD" id="6988"/>
<dbReference type="eggNOG" id="ENOG502S6IC">
    <property type="taxonomic scope" value="Eukaryota"/>
</dbReference>
<dbReference type="HOGENOM" id="CLU_157357_0_0_1"/>
<dbReference type="InParanoid" id="Q5R7E2"/>
<dbReference type="OrthoDB" id="9529463at2759"/>
<dbReference type="TreeFam" id="TF330748"/>
<dbReference type="Proteomes" id="UP000001595">
    <property type="component" value="Chromosome 3"/>
</dbReference>
<dbReference type="GO" id="GO:0016020">
    <property type="term" value="C:membrane"/>
    <property type="evidence" value="ECO:0007669"/>
    <property type="project" value="UniProtKB-SubCell"/>
</dbReference>
<dbReference type="GO" id="GO:0072675">
    <property type="term" value="P:osteoclast fusion"/>
    <property type="evidence" value="ECO:0007669"/>
    <property type="project" value="TreeGrafter"/>
</dbReference>
<dbReference type="InterPro" id="IPR016560">
    <property type="entry name" value="TCTA"/>
</dbReference>
<dbReference type="PANTHER" id="PTHR32267">
    <property type="entry name" value="T-CELL LEUKEMIA TRANSLOCATION-ALTERED GENE PROTEIN"/>
    <property type="match status" value="1"/>
</dbReference>
<dbReference type="PANTHER" id="PTHR32267:SF2">
    <property type="entry name" value="T-CELL LEUKEMIA TRANSLOCATION-ALTERED GENE PROTEIN"/>
    <property type="match status" value="1"/>
</dbReference>
<dbReference type="Pfam" id="PF15128">
    <property type="entry name" value="T_cell_tran_alt"/>
    <property type="match status" value="1"/>
</dbReference>
<dbReference type="PIRSF" id="PIRSF009935">
    <property type="entry name" value="TCTA"/>
    <property type="match status" value="1"/>
</dbReference>
<proteinExistence type="inferred from homology"/>
<organism>
    <name type="scientific">Pongo abelii</name>
    <name type="common">Sumatran orangutan</name>
    <name type="synonym">Pongo pygmaeus abelii</name>
    <dbReference type="NCBI Taxonomy" id="9601"/>
    <lineage>
        <taxon>Eukaryota</taxon>
        <taxon>Metazoa</taxon>
        <taxon>Chordata</taxon>
        <taxon>Craniata</taxon>
        <taxon>Vertebrata</taxon>
        <taxon>Euteleostomi</taxon>
        <taxon>Mammalia</taxon>
        <taxon>Eutheria</taxon>
        <taxon>Euarchontoglires</taxon>
        <taxon>Primates</taxon>
        <taxon>Haplorrhini</taxon>
        <taxon>Catarrhini</taxon>
        <taxon>Hominidae</taxon>
        <taxon>Pongo</taxon>
    </lineage>
</organism>
<reference key="1">
    <citation type="submission" date="2004-11" db="EMBL/GenBank/DDBJ databases">
        <authorList>
            <consortium name="The German cDNA consortium"/>
        </authorList>
    </citation>
    <scope>NUCLEOTIDE SEQUENCE [LARGE SCALE MRNA]</scope>
    <source>
        <tissue>Kidney</tissue>
    </source>
</reference>
<protein>
    <recommendedName>
        <fullName>T-cell leukemia translocation-altered gene protein homolog</fullName>
    </recommendedName>
</protein>